<accession>P15792</accession>
<evidence type="ECO:0000255" key="1">
    <source>
        <dbReference type="PROSITE-ProRule" id="PRU00159"/>
    </source>
</evidence>
<evidence type="ECO:0000255" key="2">
    <source>
        <dbReference type="PROSITE-ProRule" id="PRU10027"/>
    </source>
</evidence>
<evidence type="ECO:0000256" key="3">
    <source>
        <dbReference type="SAM" id="MobiDB-lite"/>
    </source>
</evidence>
<name>KPK1_PHAVU</name>
<organism>
    <name type="scientific">Phaseolus vulgaris</name>
    <name type="common">Kidney bean</name>
    <name type="synonym">French bean</name>
    <dbReference type="NCBI Taxonomy" id="3885"/>
    <lineage>
        <taxon>Eukaryota</taxon>
        <taxon>Viridiplantae</taxon>
        <taxon>Streptophyta</taxon>
        <taxon>Embryophyta</taxon>
        <taxon>Tracheophyta</taxon>
        <taxon>Spermatophyta</taxon>
        <taxon>Magnoliopsida</taxon>
        <taxon>eudicotyledons</taxon>
        <taxon>Gunneridae</taxon>
        <taxon>Pentapetalae</taxon>
        <taxon>rosids</taxon>
        <taxon>fabids</taxon>
        <taxon>Fabales</taxon>
        <taxon>Fabaceae</taxon>
        <taxon>Papilionoideae</taxon>
        <taxon>50 kb inversion clade</taxon>
        <taxon>NPAAA clade</taxon>
        <taxon>indigoferoid/millettioid clade</taxon>
        <taxon>Phaseoleae</taxon>
        <taxon>Phaseolus</taxon>
    </lineage>
</organism>
<feature type="chain" id="PRO_0000086164" description="Protein kinase PVPK-1">
    <location>
        <begin position="1"/>
        <end position="609"/>
    </location>
</feature>
<feature type="domain" description="Protein kinase" evidence="1">
    <location>
        <begin position="229"/>
        <end position="565"/>
    </location>
</feature>
<feature type="region of interest" description="Disordered" evidence="3">
    <location>
        <begin position="1"/>
        <end position="51"/>
    </location>
</feature>
<feature type="region of interest" description="Disordered" evidence="3">
    <location>
        <begin position="80"/>
        <end position="100"/>
    </location>
</feature>
<feature type="region of interest" description="Disordered" evidence="3">
    <location>
        <begin position="429"/>
        <end position="448"/>
    </location>
</feature>
<feature type="compositionally biased region" description="Polar residues" evidence="3">
    <location>
        <begin position="1"/>
        <end position="19"/>
    </location>
</feature>
<feature type="active site" description="Proton acceptor" evidence="1 2">
    <location>
        <position position="354"/>
    </location>
</feature>
<feature type="binding site" evidence="1">
    <location>
        <begin position="235"/>
        <end position="243"/>
    </location>
    <ligand>
        <name>ATP</name>
        <dbReference type="ChEBI" id="CHEBI:30616"/>
    </ligand>
</feature>
<feature type="binding site" evidence="1">
    <location>
        <position position="258"/>
    </location>
    <ligand>
        <name>ATP</name>
        <dbReference type="ChEBI" id="CHEBI:30616"/>
    </ligand>
</feature>
<dbReference type="EC" id="2.7.11.1"/>
<dbReference type="EMBL" id="J04555">
    <property type="protein sequence ID" value="AAA33772.1"/>
    <property type="molecule type" value="mRNA"/>
</dbReference>
<dbReference type="PIR" id="A30311">
    <property type="entry name" value="A30311"/>
</dbReference>
<dbReference type="SMR" id="P15792"/>
<dbReference type="eggNOG" id="KOG0610">
    <property type="taxonomic scope" value="Eukaryota"/>
</dbReference>
<dbReference type="BRENDA" id="2.7.11.1">
    <property type="organism ID" value="4746"/>
</dbReference>
<dbReference type="GO" id="GO:0005524">
    <property type="term" value="F:ATP binding"/>
    <property type="evidence" value="ECO:0007669"/>
    <property type="project" value="UniProtKB-KW"/>
</dbReference>
<dbReference type="GO" id="GO:0106310">
    <property type="term" value="F:protein serine kinase activity"/>
    <property type="evidence" value="ECO:0007669"/>
    <property type="project" value="RHEA"/>
</dbReference>
<dbReference type="GO" id="GO:0004674">
    <property type="term" value="F:protein serine/threonine kinase activity"/>
    <property type="evidence" value="ECO:0007669"/>
    <property type="project" value="UniProtKB-KW"/>
</dbReference>
<dbReference type="CDD" id="cd05574">
    <property type="entry name" value="STKc_phototropin_like"/>
    <property type="match status" value="1"/>
</dbReference>
<dbReference type="FunFam" id="3.30.200.20:FF:000032">
    <property type="entry name" value="Serine/threonine-protein kinase D6PK-like"/>
    <property type="match status" value="1"/>
</dbReference>
<dbReference type="FunFam" id="1.10.510.10:FF:000020">
    <property type="entry name" value="serine/threonine-protein kinase D6PK-like"/>
    <property type="match status" value="1"/>
</dbReference>
<dbReference type="FunFam" id="1.10.510.10:FF:000028">
    <property type="entry name" value="serine/threonine-protein kinase D6PK-like"/>
    <property type="match status" value="1"/>
</dbReference>
<dbReference type="Gene3D" id="3.30.200.20">
    <property type="entry name" value="Phosphorylase Kinase, domain 1"/>
    <property type="match status" value="1"/>
</dbReference>
<dbReference type="Gene3D" id="1.10.510.10">
    <property type="entry name" value="Transferase(Phosphotransferase) domain 1"/>
    <property type="match status" value="2"/>
</dbReference>
<dbReference type="InterPro" id="IPR011009">
    <property type="entry name" value="Kinase-like_dom_sf"/>
</dbReference>
<dbReference type="InterPro" id="IPR000719">
    <property type="entry name" value="Prot_kinase_dom"/>
</dbReference>
<dbReference type="InterPro" id="IPR008271">
    <property type="entry name" value="Ser/Thr_kinase_AS"/>
</dbReference>
<dbReference type="PANTHER" id="PTHR45637">
    <property type="entry name" value="FLIPPASE KINASE 1-RELATED"/>
    <property type="match status" value="1"/>
</dbReference>
<dbReference type="Pfam" id="PF00069">
    <property type="entry name" value="Pkinase"/>
    <property type="match status" value="2"/>
</dbReference>
<dbReference type="SMART" id="SM00220">
    <property type="entry name" value="S_TKc"/>
    <property type="match status" value="1"/>
</dbReference>
<dbReference type="SUPFAM" id="SSF56112">
    <property type="entry name" value="Protein kinase-like (PK-like)"/>
    <property type="match status" value="1"/>
</dbReference>
<dbReference type="PROSITE" id="PS50011">
    <property type="entry name" value="PROTEIN_KINASE_DOM"/>
    <property type="match status" value="1"/>
</dbReference>
<dbReference type="PROSITE" id="PS00108">
    <property type="entry name" value="PROTEIN_KINASE_ST"/>
    <property type="match status" value="1"/>
</dbReference>
<sequence length="609" mass="68101">MESSVNGVDSLSEVQNSVSGVHHHDPLPSGTPQPSRPPLRASRNYDGGHQTKAIHHHNSHVINQKHSHQEGKTLKQEGLPTKLSSKQPPLDDSKGCEPNGVLESEKKRVVDNHGKNYSQPDATFCASPQNSFYSATVYSEAKESFTNTEVSECASVDKSCESEVANSSDFNESRKTSICRASTGSDASDESSTSSLSSVLYKPHKANDIRWEAIQAVRTRDGMLEMRHFRLLKKLGCGDIGSVYLAELSGTRTSFAMKVMNKTELANRKKLLRAQTEREILQSLDHPFLPTLYTHFETEIFSCLVMEFCPGGDLHALRQRQPGKYFSEHAVRFYVAEVLLSLEYLHMLGIIYRDLKPENVLVREDGHIMLSDFDLSLRCSVSPTLVKSSNNLQTKSSGYCVQPSCIEPTCVMQPDCIKPSCFTPRFLSGKSKKDKKSKPKNDMHNQVTPLPELIAEPTNARSMSFVGTHEYLAPEIIKGEGHGSAVDWWTFGIFLYELLFGRTPFKGSANRATLFNVIGQPLRFPESPTVSFAARDLIRGLLVKEPQHRLAYRRGATEIKQHPFFQNVNWALIRCATPPEVPRQVINLPQTEKDLGVKPSGNYLDIDFF</sequence>
<reference key="1">
    <citation type="journal article" date="1989" name="Proc. Natl. Acad. Sci. U.S.A.">
        <title>Molecular cloning of plant transcripts encoding protein kinase homologs.</title>
        <authorList>
            <person name="Lawton M.A."/>
            <person name="Yamamoto R.T."/>
            <person name="Hanks S.K."/>
            <person name="Lamb C.J."/>
        </authorList>
    </citation>
    <scope>NUCLEOTIDE SEQUENCE [MRNA]</scope>
</reference>
<keyword id="KW-0067">ATP-binding</keyword>
<keyword id="KW-0418">Kinase</keyword>
<keyword id="KW-0547">Nucleotide-binding</keyword>
<keyword id="KW-0723">Serine/threonine-protein kinase</keyword>
<keyword id="KW-0808">Transferase</keyword>
<comment type="catalytic activity">
    <reaction>
        <text>L-seryl-[protein] + ATP = O-phospho-L-seryl-[protein] + ADP + H(+)</text>
        <dbReference type="Rhea" id="RHEA:17989"/>
        <dbReference type="Rhea" id="RHEA-COMP:9863"/>
        <dbReference type="Rhea" id="RHEA-COMP:11604"/>
        <dbReference type="ChEBI" id="CHEBI:15378"/>
        <dbReference type="ChEBI" id="CHEBI:29999"/>
        <dbReference type="ChEBI" id="CHEBI:30616"/>
        <dbReference type="ChEBI" id="CHEBI:83421"/>
        <dbReference type="ChEBI" id="CHEBI:456216"/>
        <dbReference type="EC" id="2.7.11.1"/>
    </reaction>
</comment>
<comment type="catalytic activity">
    <reaction>
        <text>L-threonyl-[protein] + ATP = O-phospho-L-threonyl-[protein] + ADP + H(+)</text>
        <dbReference type="Rhea" id="RHEA:46608"/>
        <dbReference type="Rhea" id="RHEA-COMP:11060"/>
        <dbReference type="Rhea" id="RHEA-COMP:11605"/>
        <dbReference type="ChEBI" id="CHEBI:15378"/>
        <dbReference type="ChEBI" id="CHEBI:30013"/>
        <dbReference type="ChEBI" id="CHEBI:30616"/>
        <dbReference type="ChEBI" id="CHEBI:61977"/>
        <dbReference type="ChEBI" id="CHEBI:456216"/>
        <dbReference type="EC" id="2.7.11.1"/>
    </reaction>
</comment>
<comment type="similarity">
    <text evidence="1">Belongs to the protein kinase superfamily. Ser/Thr protein kinase family.</text>
</comment>
<protein>
    <recommendedName>
        <fullName>Protein kinase PVPK-1</fullName>
        <ecNumber>2.7.11.1</ecNumber>
    </recommendedName>
</protein>
<proteinExistence type="evidence at transcript level"/>